<dbReference type="EC" id="2.7.1.30" evidence="1"/>
<dbReference type="EMBL" id="CP000123">
    <property type="protein sequence ID" value="ABC01712.1"/>
    <property type="molecule type" value="Genomic_DNA"/>
</dbReference>
<dbReference type="SMR" id="Q2SSQ8"/>
<dbReference type="KEGG" id="mcp:MCAP_0218"/>
<dbReference type="HOGENOM" id="CLU_009281_2_3_14"/>
<dbReference type="PhylomeDB" id="Q2SSQ8"/>
<dbReference type="UniPathway" id="UPA00618">
    <property type="reaction ID" value="UER00672"/>
</dbReference>
<dbReference type="Proteomes" id="UP000001928">
    <property type="component" value="Chromosome"/>
</dbReference>
<dbReference type="GO" id="GO:0005829">
    <property type="term" value="C:cytosol"/>
    <property type="evidence" value="ECO:0007669"/>
    <property type="project" value="TreeGrafter"/>
</dbReference>
<dbReference type="GO" id="GO:0005524">
    <property type="term" value="F:ATP binding"/>
    <property type="evidence" value="ECO:0007669"/>
    <property type="project" value="UniProtKB-UniRule"/>
</dbReference>
<dbReference type="GO" id="GO:0004370">
    <property type="term" value="F:glycerol kinase activity"/>
    <property type="evidence" value="ECO:0000250"/>
    <property type="project" value="UniProtKB"/>
</dbReference>
<dbReference type="GO" id="GO:0019563">
    <property type="term" value="P:glycerol catabolic process"/>
    <property type="evidence" value="ECO:0007669"/>
    <property type="project" value="UniProtKB-UniRule"/>
</dbReference>
<dbReference type="GO" id="GO:0006071">
    <property type="term" value="P:glycerol metabolic process"/>
    <property type="evidence" value="ECO:0000250"/>
    <property type="project" value="UniProtKB"/>
</dbReference>
<dbReference type="GO" id="GO:0006072">
    <property type="term" value="P:glycerol-3-phosphate metabolic process"/>
    <property type="evidence" value="ECO:0007669"/>
    <property type="project" value="InterPro"/>
</dbReference>
<dbReference type="CDD" id="cd07786">
    <property type="entry name" value="FGGY_EcGK_like"/>
    <property type="match status" value="1"/>
</dbReference>
<dbReference type="FunFam" id="3.30.420.40:FF:000007">
    <property type="entry name" value="Glycerol kinase"/>
    <property type="match status" value="1"/>
</dbReference>
<dbReference type="FunFam" id="3.30.420.40:FF:000008">
    <property type="entry name" value="Glycerol kinase"/>
    <property type="match status" value="1"/>
</dbReference>
<dbReference type="Gene3D" id="3.30.420.40">
    <property type="match status" value="2"/>
</dbReference>
<dbReference type="HAMAP" id="MF_00186">
    <property type="entry name" value="Glycerol_kin"/>
    <property type="match status" value="1"/>
</dbReference>
<dbReference type="InterPro" id="IPR043129">
    <property type="entry name" value="ATPase_NBD"/>
</dbReference>
<dbReference type="InterPro" id="IPR000577">
    <property type="entry name" value="Carb_kinase_FGGY"/>
</dbReference>
<dbReference type="InterPro" id="IPR018483">
    <property type="entry name" value="Carb_kinase_FGGY_CS"/>
</dbReference>
<dbReference type="InterPro" id="IPR018485">
    <property type="entry name" value="FGGY_C"/>
</dbReference>
<dbReference type="InterPro" id="IPR018484">
    <property type="entry name" value="FGGY_N"/>
</dbReference>
<dbReference type="InterPro" id="IPR005999">
    <property type="entry name" value="Glycerol_kin"/>
</dbReference>
<dbReference type="NCBIfam" id="TIGR01311">
    <property type="entry name" value="glycerol_kin"/>
    <property type="match status" value="1"/>
</dbReference>
<dbReference type="NCBIfam" id="NF000756">
    <property type="entry name" value="PRK00047.1"/>
    <property type="match status" value="1"/>
</dbReference>
<dbReference type="PANTHER" id="PTHR10196:SF69">
    <property type="entry name" value="GLYCEROL KINASE"/>
    <property type="match status" value="1"/>
</dbReference>
<dbReference type="PANTHER" id="PTHR10196">
    <property type="entry name" value="SUGAR KINASE"/>
    <property type="match status" value="1"/>
</dbReference>
<dbReference type="Pfam" id="PF02782">
    <property type="entry name" value="FGGY_C"/>
    <property type="match status" value="1"/>
</dbReference>
<dbReference type="Pfam" id="PF00370">
    <property type="entry name" value="FGGY_N"/>
    <property type="match status" value="1"/>
</dbReference>
<dbReference type="PIRSF" id="PIRSF000538">
    <property type="entry name" value="GlpK"/>
    <property type="match status" value="1"/>
</dbReference>
<dbReference type="SUPFAM" id="SSF53067">
    <property type="entry name" value="Actin-like ATPase domain"/>
    <property type="match status" value="2"/>
</dbReference>
<dbReference type="PROSITE" id="PS00933">
    <property type="entry name" value="FGGY_KINASES_1"/>
    <property type="match status" value="1"/>
</dbReference>
<dbReference type="PROSITE" id="PS00445">
    <property type="entry name" value="FGGY_KINASES_2"/>
    <property type="match status" value="1"/>
</dbReference>
<evidence type="ECO:0000255" key="1">
    <source>
        <dbReference type="HAMAP-Rule" id="MF_00186"/>
    </source>
</evidence>
<sequence length="505" mass="57158">MNNIKKYILTLDEGTTSARALITDKEGNIIAVEQSEFTQYFPKEGWVEHDAIEIWNTQRSALVQVLNKSGIDPSQIEAIGITNQRETAVVWNKETGLPIYNAIVWQDQRTADYCQTFDKDTLEMVKQKSGLIINPYFSGTKVKWILDNVPNARQLAKEGKLMFGTINTWLIYRLTGGEVFVTDHTNAQRTLLYNIHTNDWDDELLKLFDIPRNILPEIKSCSEVYGYTFKGLFSKGNEQRIKIASSIGDQQSALFGQLCLEKGQVKVTYGTGCFILTNTGEEIVKSNHGLLTTVAYSFKDKVYYALEGSVMIAGAAVQWLRDNLRIVYNAIETEWYAGQVKDDRRVYVVPSFTGLGSPYWDSFSRGAIFGLDRGTRREHIVRATLEAIAYQANDVVDAMGKDMKKPIEIFKVDGGAANNKFLMQFQSNISQSKVIKPTNIETTAMGAAFMAGLAVGYWENVEELKKTYKVHFELTPELSKPEVDKLIKGWKVAVQRTFKWVEEIE</sequence>
<name>GLPK_MYCCT</name>
<protein>
    <recommendedName>
        <fullName evidence="1">Glycerol kinase</fullName>
        <ecNumber evidence="1">2.7.1.30</ecNumber>
    </recommendedName>
    <alternativeName>
        <fullName evidence="1">ATP:glycerol 3-phosphotransferase</fullName>
    </alternativeName>
    <alternativeName>
        <fullName evidence="1">Glycerokinase</fullName>
        <shortName evidence="1">GK</shortName>
    </alternativeName>
</protein>
<feature type="chain" id="PRO_1000020746" description="Glycerol kinase">
    <location>
        <begin position="1"/>
        <end position="505"/>
    </location>
</feature>
<feature type="binding site" evidence="1">
    <location>
        <position position="15"/>
    </location>
    <ligand>
        <name>ADP</name>
        <dbReference type="ChEBI" id="CHEBI:456216"/>
    </ligand>
</feature>
<feature type="binding site" evidence="1">
    <location>
        <position position="15"/>
    </location>
    <ligand>
        <name>ATP</name>
        <dbReference type="ChEBI" id="CHEBI:30616"/>
    </ligand>
</feature>
<feature type="binding site" evidence="1">
    <location>
        <position position="15"/>
    </location>
    <ligand>
        <name>sn-glycerol 3-phosphate</name>
        <dbReference type="ChEBI" id="CHEBI:57597"/>
    </ligand>
</feature>
<feature type="binding site" evidence="1">
    <location>
        <position position="16"/>
    </location>
    <ligand>
        <name>ATP</name>
        <dbReference type="ChEBI" id="CHEBI:30616"/>
    </ligand>
</feature>
<feature type="binding site" evidence="1">
    <location>
        <position position="17"/>
    </location>
    <ligand>
        <name>ATP</name>
        <dbReference type="ChEBI" id="CHEBI:30616"/>
    </ligand>
</feature>
<feature type="binding site" evidence="1">
    <location>
        <position position="19"/>
    </location>
    <ligand>
        <name>ADP</name>
        <dbReference type="ChEBI" id="CHEBI:456216"/>
    </ligand>
</feature>
<feature type="binding site" evidence="1">
    <location>
        <position position="85"/>
    </location>
    <ligand>
        <name>glycerol</name>
        <dbReference type="ChEBI" id="CHEBI:17754"/>
    </ligand>
</feature>
<feature type="binding site" evidence="1">
    <location>
        <position position="85"/>
    </location>
    <ligand>
        <name>sn-glycerol 3-phosphate</name>
        <dbReference type="ChEBI" id="CHEBI:57597"/>
    </ligand>
</feature>
<feature type="binding site" evidence="1">
    <location>
        <position position="86"/>
    </location>
    <ligand>
        <name>glycerol</name>
        <dbReference type="ChEBI" id="CHEBI:17754"/>
    </ligand>
</feature>
<feature type="binding site" evidence="1">
    <location>
        <position position="86"/>
    </location>
    <ligand>
        <name>sn-glycerol 3-phosphate</name>
        <dbReference type="ChEBI" id="CHEBI:57597"/>
    </ligand>
</feature>
<feature type="binding site" evidence="1">
    <location>
        <position position="136"/>
    </location>
    <ligand>
        <name>glycerol</name>
        <dbReference type="ChEBI" id="CHEBI:17754"/>
    </ligand>
</feature>
<feature type="binding site" evidence="1">
    <location>
        <position position="136"/>
    </location>
    <ligand>
        <name>sn-glycerol 3-phosphate</name>
        <dbReference type="ChEBI" id="CHEBI:57597"/>
    </ligand>
</feature>
<feature type="binding site" evidence="1">
    <location>
        <position position="249"/>
    </location>
    <ligand>
        <name>glycerol</name>
        <dbReference type="ChEBI" id="CHEBI:17754"/>
    </ligand>
</feature>
<feature type="binding site" evidence="1">
    <location>
        <position position="249"/>
    </location>
    <ligand>
        <name>sn-glycerol 3-phosphate</name>
        <dbReference type="ChEBI" id="CHEBI:57597"/>
    </ligand>
</feature>
<feature type="binding site" evidence="1">
    <location>
        <position position="250"/>
    </location>
    <ligand>
        <name>glycerol</name>
        <dbReference type="ChEBI" id="CHEBI:17754"/>
    </ligand>
</feature>
<feature type="binding site" evidence="1">
    <location>
        <position position="271"/>
    </location>
    <ligand>
        <name>ADP</name>
        <dbReference type="ChEBI" id="CHEBI:456216"/>
    </ligand>
</feature>
<feature type="binding site" evidence="1">
    <location>
        <position position="271"/>
    </location>
    <ligand>
        <name>ATP</name>
        <dbReference type="ChEBI" id="CHEBI:30616"/>
    </ligand>
</feature>
<feature type="binding site" evidence="1">
    <location>
        <position position="314"/>
    </location>
    <ligand>
        <name>ADP</name>
        <dbReference type="ChEBI" id="CHEBI:456216"/>
    </ligand>
</feature>
<feature type="binding site" evidence="1">
    <location>
        <position position="314"/>
    </location>
    <ligand>
        <name>ATP</name>
        <dbReference type="ChEBI" id="CHEBI:30616"/>
    </ligand>
</feature>
<feature type="binding site" evidence="1">
    <location>
        <position position="318"/>
    </location>
    <ligand>
        <name>ATP</name>
        <dbReference type="ChEBI" id="CHEBI:30616"/>
    </ligand>
</feature>
<feature type="binding site" evidence="1">
    <location>
        <position position="415"/>
    </location>
    <ligand>
        <name>ADP</name>
        <dbReference type="ChEBI" id="CHEBI:456216"/>
    </ligand>
</feature>
<feature type="binding site" evidence="1">
    <location>
        <position position="415"/>
    </location>
    <ligand>
        <name>ATP</name>
        <dbReference type="ChEBI" id="CHEBI:30616"/>
    </ligand>
</feature>
<feature type="binding site" evidence="1">
    <location>
        <position position="419"/>
    </location>
    <ligand>
        <name>ADP</name>
        <dbReference type="ChEBI" id="CHEBI:456216"/>
    </ligand>
</feature>
<reference key="1">
    <citation type="submission" date="2005-09" db="EMBL/GenBank/DDBJ databases">
        <authorList>
            <person name="Glass J.I."/>
            <person name="Lartigue C."/>
            <person name="Pfannkoch C."/>
            <person name="Baden-Tillson H."/>
            <person name="Smith H.O."/>
            <person name="Venter J.C."/>
            <person name="Roske K."/>
            <person name="Wise K.S."/>
            <person name="Calcutt M.J."/>
            <person name="Nelson W.C."/>
            <person name="Nierman W.C."/>
        </authorList>
    </citation>
    <scope>NUCLEOTIDE SEQUENCE [LARGE SCALE GENOMIC DNA]</scope>
    <source>
        <strain>California kid / ATCC 27343 / NCTC 10154</strain>
    </source>
</reference>
<accession>Q2SSQ8</accession>
<keyword id="KW-0067">ATP-binding</keyword>
<keyword id="KW-0319">Glycerol metabolism</keyword>
<keyword id="KW-0418">Kinase</keyword>
<keyword id="KW-0547">Nucleotide-binding</keyword>
<keyword id="KW-0808">Transferase</keyword>
<comment type="function">
    <text evidence="1">Key enzyme in the regulation of glycerol uptake and metabolism. Catalyzes the phosphorylation of glycerol to yield sn-glycerol 3-phosphate.</text>
</comment>
<comment type="catalytic activity">
    <reaction evidence="1">
        <text>glycerol + ATP = sn-glycerol 3-phosphate + ADP + H(+)</text>
        <dbReference type="Rhea" id="RHEA:21644"/>
        <dbReference type="ChEBI" id="CHEBI:15378"/>
        <dbReference type="ChEBI" id="CHEBI:17754"/>
        <dbReference type="ChEBI" id="CHEBI:30616"/>
        <dbReference type="ChEBI" id="CHEBI:57597"/>
        <dbReference type="ChEBI" id="CHEBI:456216"/>
        <dbReference type="EC" id="2.7.1.30"/>
    </reaction>
</comment>
<comment type="activity regulation">
    <text evidence="1">Inhibited by fructose 1,6-bisphosphate (FBP).</text>
</comment>
<comment type="pathway">
    <text evidence="1">Polyol metabolism; glycerol degradation via glycerol kinase pathway; sn-glycerol 3-phosphate from glycerol: step 1/1.</text>
</comment>
<comment type="similarity">
    <text evidence="1">Belongs to the FGGY kinase family.</text>
</comment>
<organism>
    <name type="scientific">Mycoplasma capricolum subsp. capricolum (strain California kid / ATCC 27343 / NCTC 10154)</name>
    <dbReference type="NCBI Taxonomy" id="340047"/>
    <lineage>
        <taxon>Bacteria</taxon>
        <taxon>Bacillati</taxon>
        <taxon>Mycoplasmatota</taxon>
        <taxon>Mollicutes</taxon>
        <taxon>Mycoplasmataceae</taxon>
        <taxon>Mycoplasma</taxon>
    </lineage>
</organism>
<proteinExistence type="inferred from homology"/>
<gene>
    <name evidence="1" type="primary">glpK</name>
    <name type="ordered locus">MCAP_0218</name>
</gene>